<sequence>MDTKTLIASEIAKVVPELEQDAIFNLLETPKNSDMGDLAFPAFSLAKVLRKAPQMIASELAEQIDESQFEKVVAVGPYINFFLDKAKISSQVLEQVITAGSDYAQQDEGQGRNVAIDMSSPNIAKPFSIGHLRSTVIGDSLAHIFAKMGYKPVKINHLGDWGKQFGMLIVAYKKWGDETAVQAHPIDELLKLYVRINAEAETDPTVDEEAREWFRKLEDGDKEATELWQWFRDESLLEFNRLYDQLHVTFDSYNGEAFYNDKMDEVLDLLEAKNLLVESKGAQVVNLEKYGIEHPALIKKSDGATLYITRDLAAALYRKRTYDFAKSVYVVGNEQAAHFKQLKAVLKEMGYDWSDDMTHVAFGLVTKGGAKLSTRKGNVILLEPTVAEAINRAASQIEAKNPNLADKEAVAHAVGVGAIKFYDLKTDRMNGYDFDLEAMVSFEGETGPYVQYAHARIQSILRKADFTPSATTTYSLADAESWEIIKLIQDFPRIIKRTSDNFEPSIMAKFAINLAQSFNKYYAHTRILDDNSERDNRLALCYATATVLKEALRLLGVDAPNEM</sequence>
<name>SYR_STRP6</name>
<gene>
    <name evidence="1" type="primary">argS</name>
    <name type="ordered locus">M6_Spy1827</name>
</gene>
<keyword id="KW-0030">Aminoacyl-tRNA synthetase</keyword>
<keyword id="KW-0067">ATP-binding</keyword>
<keyword id="KW-0963">Cytoplasm</keyword>
<keyword id="KW-0436">Ligase</keyword>
<keyword id="KW-0547">Nucleotide-binding</keyword>
<keyword id="KW-0648">Protein biosynthesis</keyword>
<feature type="chain" id="PRO_0000151622" description="Arginine--tRNA ligase">
    <location>
        <begin position="1"/>
        <end position="563"/>
    </location>
</feature>
<feature type="short sequence motif" description="'HIGH' region">
    <location>
        <begin position="121"/>
        <end position="131"/>
    </location>
</feature>
<proteinExistence type="inferred from homology"/>
<protein>
    <recommendedName>
        <fullName evidence="1">Arginine--tRNA ligase</fullName>
        <ecNumber evidence="1">6.1.1.19</ecNumber>
    </recommendedName>
    <alternativeName>
        <fullName evidence="1">Arginyl-tRNA synthetase</fullName>
        <shortName evidence="1">ArgRS</shortName>
    </alternativeName>
</protein>
<reference key="1">
    <citation type="journal article" date="2004" name="J. Infect. Dis.">
        <title>Progress toward characterization of the group A Streptococcus metagenome: complete genome sequence of a macrolide-resistant serotype M6 strain.</title>
        <authorList>
            <person name="Banks D.J."/>
            <person name="Porcella S.F."/>
            <person name="Barbian K.D."/>
            <person name="Beres S.B."/>
            <person name="Philips L.E."/>
            <person name="Voyich J.M."/>
            <person name="DeLeo F.R."/>
            <person name="Martin J.M."/>
            <person name="Somerville G.A."/>
            <person name="Musser J.M."/>
        </authorList>
    </citation>
    <scope>NUCLEOTIDE SEQUENCE [LARGE SCALE GENOMIC DNA]</scope>
    <source>
        <strain>ATCC BAA-946 / MGAS10394</strain>
    </source>
</reference>
<accession>Q5X9F1</accession>
<comment type="catalytic activity">
    <reaction evidence="1">
        <text>tRNA(Arg) + L-arginine + ATP = L-arginyl-tRNA(Arg) + AMP + diphosphate</text>
        <dbReference type="Rhea" id="RHEA:20301"/>
        <dbReference type="Rhea" id="RHEA-COMP:9658"/>
        <dbReference type="Rhea" id="RHEA-COMP:9673"/>
        <dbReference type="ChEBI" id="CHEBI:30616"/>
        <dbReference type="ChEBI" id="CHEBI:32682"/>
        <dbReference type="ChEBI" id="CHEBI:33019"/>
        <dbReference type="ChEBI" id="CHEBI:78442"/>
        <dbReference type="ChEBI" id="CHEBI:78513"/>
        <dbReference type="ChEBI" id="CHEBI:456215"/>
        <dbReference type="EC" id="6.1.1.19"/>
    </reaction>
</comment>
<comment type="subunit">
    <text evidence="1">Monomer.</text>
</comment>
<comment type="subcellular location">
    <subcellularLocation>
        <location evidence="1">Cytoplasm</location>
    </subcellularLocation>
</comment>
<comment type="similarity">
    <text evidence="1">Belongs to the class-I aminoacyl-tRNA synthetase family.</text>
</comment>
<dbReference type="EC" id="6.1.1.19" evidence="1"/>
<dbReference type="EMBL" id="CP000003">
    <property type="protein sequence ID" value="AAT87962.1"/>
    <property type="molecule type" value="Genomic_DNA"/>
</dbReference>
<dbReference type="RefSeq" id="WP_011185081.1">
    <property type="nucleotide sequence ID" value="NC_006086.1"/>
</dbReference>
<dbReference type="SMR" id="Q5X9F1"/>
<dbReference type="KEGG" id="spa:M6_Spy1827"/>
<dbReference type="HOGENOM" id="CLU_006406_6_1_9"/>
<dbReference type="Proteomes" id="UP000001167">
    <property type="component" value="Chromosome"/>
</dbReference>
<dbReference type="GO" id="GO:0005737">
    <property type="term" value="C:cytoplasm"/>
    <property type="evidence" value="ECO:0007669"/>
    <property type="project" value="UniProtKB-SubCell"/>
</dbReference>
<dbReference type="GO" id="GO:0004814">
    <property type="term" value="F:arginine-tRNA ligase activity"/>
    <property type="evidence" value="ECO:0007669"/>
    <property type="project" value="UniProtKB-UniRule"/>
</dbReference>
<dbReference type="GO" id="GO:0005524">
    <property type="term" value="F:ATP binding"/>
    <property type="evidence" value="ECO:0007669"/>
    <property type="project" value="UniProtKB-UniRule"/>
</dbReference>
<dbReference type="GO" id="GO:0006420">
    <property type="term" value="P:arginyl-tRNA aminoacylation"/>
    <property type="evidence" value="ECO:0007669"/>
    <property type="project" value="UniProtKB-UniRule"/>
</dbReference>
<dbReference type="CDD" id="cd07956">
    <property type="entry name" value="Anticodon_Ia_Arg"/>
    <property type="match status" value="1"/>
</dbReference>
<dbReference type="CDD" id="cd00671">
    <property type="entry name" value="ArgRS_core"/>
    <property type="match status" value="1"/>
</dbReference>
<dbReference type="FunFam" id="3.40.50.620:FF:000116">
    <property type="entry name" value="Arginine--tRNA ligase"/>
    <property type="match status" value="1"/>
</dbReference>
<dbReference type="FunFam" id="1.10.730.10:FF:000006">
    <property type="entry name" value="Arginyl-tRNA synthetase 2, mitochondrial"/>
    <property type="match status" value="1"/>
</dbReference>
<dbReference type="Gene3D" id="3.30.1360.70">
    <property type="entry name" value="Arginyl tRNA synthetase N-terminal domain"/>
    <property type="match status" value="1"/>
</dbReference>
<dbReference type="Gene3D" id="3.40.50.620">
    <property type="entry name" value="HUPs"/>
    <property type="match status" value="1"/>
</dbReference>
<dbReference type="Gene3D" id="1.10.730.10">
    <property type="entry name" value="Isoleucyl-tRNA Synthetase, Domain 1"/>
    <property type="match status" value="1"/>
</dbReference>
<dbReference type="HAMAP" id="MF_00123">
    <property type="entry name" value="Arg_tRNA_synth"/>
    <property type="match status" value="1"/>
</dbReference>
<dbReference type="InterPro" id="IPR001278">
    <property type="entry name" value="Arg-tRNA-ligase"/>
</dbReference>
<dbReference type="InterPro" id="IPR005148">
    <property type="entry name" value="Arg-tRNA-synth_N"/>
</dbReference>
<dbReference type="InterPro" id="IPR036695">
    <property type="entry name" value="Arg-tRNA-synth_N_sf"/>
</dbReference>
<dbReference type="InterPro" id="IPR035684">
    <property type="entry name" value="ArgRS_core"/>
</dbReference>
<dbReference type="InterPro" id="IPR008909">
    <property type="entry name" value="DALR_anticod-bd"/>
</dbReference>
<dbReference type="InterPro" id="IPR014729">
    <property type="entry name" value="Rossmann-like_a/b/a_fold"/>
</dbReference>
<dbReference type="InterPro" id="IPR009080">
    <property type="entry name" value="tRNAsynth_Ia_anticodon-bd"/>
</dbReference>
<dbReference type="NCBIfam" id="TIGR00456">
    <property type="entry name" value="argS"/>
    <property type="match status" value="1"/>
</dbReference>
<dbReference type="PANTHER" id="PTHR11956:SF5">
    <property type="entry name" value="ARGININE--TRNA LIGASE, CYTOPLASMIC"/>
    <property type="match status" value="1"/>
</dbReference>
<dbReference type="PANTHER" id="PTHR11956">
    <property type="entry name" value="ARGINYL-TRNA SYNTHETASE"/>
    <property type="match status" value="1"/>
</dbReference>
<dbReference type="Pfam" id="PF03485">
    <property type="entry name" value="Arg_tRNA_synt_N"/>
    <property type="match status" value="1"/>
</dbReference>
<dbReference type="Pfam" id="PF05746">
    <property type="entry name" value="DALR_1"/>
    <property type="match status" value="1"/>
</dbReference>
<dbReference type="Pfam" id="PF00750">
    <property type="entry name" value="tRNA-synt_1d"/>
    <property type="match status" value="1"/>
</dbReference>
<dbReference type="PRINTS" id="PR01038">
    <property type="entry name" value="TRNASYNTHARG"/>
</dbReference>
<dbReference type="SMART" id="SM01016">
    <property type="entry name" value="Arg_tRNA_synt_N"/>
    <property type="match status" value="1"/>
</dbReference>
<dbReference type="SMART" id="SM00836">
    <property type="entry name" value="DALR_1"/>
    <property type="match status" value="1"/>
</dbReference>
<dbReference type="SUPFAM" id="SSF47323">
    <property type="entry name" value="Anticodon-binding domain of a subclass of class I aminoacyl-tRNA synthetases"/>
    <property type="match status" value="1"/>
</dbReference>
<dbReference type="SUPFAM" id="SSF55190">
    <property type="entry name" value="Arginyl-tRNA synthetase (ArgRS), N-terminal 'additional' domain"/>
    <property type="match status" value="1"/>
</dbReference>
<dbReference type="SUPFAM" id="SSF52374">
    <property type="entry name" value="Nucleotidylyl transferase"/>
    <property type="match status" value="1"/>
</dbReference>
<evidence type="ECO:0000255" key="1">
    <source>
        <dbReference type="HAMAP-Rule" id="MF_00123"/>
    </source>
</evidence>
<organism>
    <name type="scientific">Streptococcus pyogenes serotype M6 (strain ATCC BAA-946 / MGAS10394)</name>
    <dbReference type="NCBI Taxonomy" id="286636"/>
    <lineage>
        <taxon>Bacteria</taxon>
        <taxon>Bacillati</taxon>
        <taxon>Bacillota</taxon>
        <taxon>Bacilli</taxon>
        <taxon>Lactobacillales</taxon>
        <taxon>Streptococcaceae</taxon>
        <taxon>Streptococcus</taxon>
    </lineage>
</organism>